<reference key="1">
    <citation type="journal article" date="1993" name="J. Gen. Virol.">
        <title>Sequencing and antigenic studies of a Norwegian virus isolated from encephalomyelitic sheep confirm the existence of louping ill virus outside Great Britain and Ireland.</title>
        <authorList>
            <person name="Gao G.F."/>
            <person name="Jiang W.R."/>
            <person name="Hussain M.H."/>
            <person name="Venugopal K."/>
            <person name="Gritsun T.S."/>
            <person name="Reid H.W."/>
            <person name="Gould E.A."/>
        </authorList>
    </citation>
    <scope>NUCLEOTIDE SEQUENCE [GENOMIC RNA]</scope>
</reference>
<organismHost>
    <name type="scientific">Bos taurus</name>
    <name type="common">Bovine</name>
    <dbReference type="NCBI Taxonomy" id="9913"/>
</organismHost>
<organismHost>
    <name type="scientific">Canis lupus familiaris</name>
    <name type="common">Dog</name>
    <name type="synonym">Canis familiaris</name>
    <dbReference type="NCBI Taxonomy" id="9615"/>
</organismHost>
<organismHost>
    <name type="scientific">Cervinae</name>
    <dbReference type="NCBI Taxonomy" id="34878"/>
</organismHost>
<organismHost>
    <name type="scientific">Equus caballus</name>
    <name type="common">Horse</name>
    <dbReference type="NCBI Taxonomy" id="9796"/>
</organismHost>
<organismHost>
    <name type="scientific">Homo sapiens</name>
    <name type="common">Human</name>
    <dbReference type="NCBI Taxonomy" id="9606"/>
</organismHost>
<organismHost>
    <name type="scientific">Ixodes ricinus</name>
    <name type="common">Common tick</name>
    <name type="synonym">Acarus ricinus</name>
    <dbReference type="NCBI Taxonomy" id="34613"/>
</organismHost>
<organismHost>
    <name type="scientific">Ovis aries</name>
    <name type="common">Sheep</name>
    <dbReference type="NCBI Taxonomy" id="9940"/>
</organismHost>
<organismHost>
    <name type="scientific">Sus scrofa</name>
    <name type="common">Pig</name>
    <dbReference type="NCBI Taxonomy" id="9823"/>
</organismHost>
<dbReference type="EMBL" id="D12935">
    <property type="protein sequence ID" value="BAA02311.1"/>
    <property type="molecule type" value="Genomic_RNA"/>
</dbReference>
<dbReference type="PIR" id="JQ1883">
    <property type="entry name" value="JQ1883"/>
</dbReference>
<dbReference type="SMR" id="P35765"/>
<dbReference type="GO" id="GO:0044167">
    <property type="term" value="C:host cell endoplasmic reticulum membrane"/>
    <property type="evidence" value="ECO:0007669"/>
    <property type="project" value="UniProtKB-SubCell"/>
</dbReference>
<dbReference type="GO" id="GO:0016020">
    <property type="term" value="C:membrane"/>
    <property type="evidence" value="ECO:0007669"/>
    <property type="project" value="UniProtKB-KW"/>
</dbReference>
<dbReference type="GO" id="GO:0019031">
    <property type="term" value="C:viral envelope"/>
    <property type="evidence" value="ECO:0007669"/>
    <property type="project" value="UniProtKB-KW"/>
</dbReference>
<dbReference type="GO" id="GO:0055036">
    <property type="term" value="C:virion membrane"/>
    <property type="evidence" value="ECO:0007669"/>
    <property type="project" value="UniProtKB-SubCell"/>
</dbReference>
<dbReference type="GO" id="GO:0046983">
    <property type="term" value="F:protein dimerization activity"/>
    <property type="evidence" value="ECO:0007669"/>
    <property type="project" value="InterPro"/>
</dbReference>
<dbReference type="GO" id="GO:0075512">
    <property type="term" value="P:clathrin-dependent endocytosis of virus by host cell"/>
    <property type="evidence" value="ECO:0007669"/>
    <property type="project" value="UniProtKB-KW"/>
</dbReference>
<dbReference type="GO" id="GO:0039654">
    <property type="term" value="P:fusion of virus membrane with host endosome membrane"/>
    <property type="evidence" value="ECO:0007669"/>
    <property type="project" value="UniProtKB-KW"/>
</dbReference>
<dbReference type="GO" id="GO:0052170">
    <property type="term" value="P:symbiont-mediated suppression of host innate immune response"/>
    <property type="evidence" value="ECO:0007669"/>
    <property type="project" value="UniProtKB-KW"/>
</dbReference>
<dbReference type="GO" id="GO:0019062">
    <property type="term" value="P:virion attachment to host cell"/>
    <property type="evidence" value="ECO:0007669"/>
    <property type="project" value="UniProtKB-KW"/>
</dbReference>
<dbReference type="CDD" id="cd12149">
    <property type="entry name" value="Flavi_E_C"/>
    <property type="match status" value="1"/>
</dbReference>
<dbReference type="FunFam" id="1.20.1280.260:FF:000001">
    <property type="entry name" value="Envelope glycoprotein"/>
    <property type="match status" value="1"/>
</dbReference>
<dbReference type="Gene3D" id="1.20.1280.260">
    <property type="match status" value="1"/>
</dbReference>
<dbReference type="Gene3D" id="2.60.40.350">
    <property type="match status" value="1"/>
</dbReference>
<dbReference type="Gene3D" id="2.60.98.10">
    <property type="entry name" value="Tick-borne Encephalitis virus Glycoprotein, domain 1"/>
    <property type="match status" value="1"/>
</dbReference>
<dbReference type="Gene3D" id="3.30.67.10">
    <property type="entry name" value="Viral Envelope Glycoprotein, domain 2"/>
    <property type="match status" value="1"/>
</dbReference>
<dbReference type="Gene3D" id="3.30.387.10">
    <property type="entry name" value="Viral Envelope Glycoprotein, domain 3"/>
    <property type="match status" value="1"/>
</dbReference>
<dbReference type="InterPro" id="IPR013755">
    <property type="entry name" value="Flav_gly_cen_dom_subdom1"/>
</dbReference>
<dbReference type="InterPro" id="IPR027287">
    <property type="entry name" value="Flavi_E_Ig-like"/>
</dbReference>
<dbReference type="InterPro" id="IPR026470">
    <property type="entry name" value="Flavi_E_Stem/Anchor_dom"/>
</dbReference>
<dbReference type="InterPro" id="IPR038345">
    <property type="entry name" value="Flavi_E_Stem/Anchor_dom_sf"/>
</dbReference>
<dbReference type="InterPro" id="IPR011998">
    <property type="entry name" value="Flavi_Glycoprot_E_cen/dimer"/>
</dbReference>
<dbReference type="InterPro" id="IPR000336">
    <property type="entry name" value="Flavivir/Alphavir_Ig-like_sf"/>
</dbReference>
<dbReference type="InterPro" id="IPR036253">
    <property type="entry name" value="Glycoprot_cen/dimer_sf"/>
</dbReference>
<dbReference type="InterPro" id="IPR038055">
    <property type="entry name" value="Glycoprot_E_dimer_dom"/>
</dbReference>
<dbReference type="InterPro" id="IPR013756">
    <property type="entry name" value="GlyE_cen_dom_subdom2"/>
</dbReference>
<dbReference type="InterPro" id="IPR014756">
    <property type="entry name" value="Ig_E-set"/>
</dbReference>
<dbReference type="NCBIfam" id="TIGR04240">
    <property type="entry name" value="flavi_E_stem"/>
    <property type="match status" value="1"/>
</dbReference>
<dbReference type="Pfam" id="PF21659">
    <property type="entry name" value="Flavi_E_stem"/>
    <property type="match status" value="1"/>
</dbReference>
<dbReference type="Pfam" id="PF02832">
    <property type="entry name" value="Flavi_glycop_C"/>
    <property type="match status" value="1"/>
</dbReference>
<dbReference type="Pfam" id="PF00869">
    <property type="entry name" value="Flavi_glycoprot"/>
    <property type="match status" value="1"/>
</dbReference>
<dbReference type="SUPFAM" id="SSF81296">
    <property type="entry name" value="E set domains"/>
    <property type="match status" value="1"/>
</dbReference>
<dbReference type="SUPFAM" id="SSF56983">
    <property type="entry name" value="Viral glycoprotein, central and dimerisation domains"/>
    <property type="match status" value="1"/>
</dbReference>
<accession>P35765</accession>
<evidence type="ECO:0000250" key="1">
    <source>
        <dbReference type="UniProtKB" id="P03314"/>
    </source>
</evidence>
<evidence type="ECO:0000250" key="2">
    <source>
        <dbReference type="UniProtKB" id="P06935"/>
    </source>
</evidence>
<evidence type="ECO:0000250" key="3">
    <source>
        <dbReference type="UniProtKB" id="P14336"/>
    </source>
</evidence>
<evidence type="ECO:0000250" key="4">
    <source>
        <dbReference type="UniProtKB" id="P17763"/>
    </source>
</evidence>
<evidence type="ECO:0000255" key="5"/>
<evidence type="ECO:0000255" key="6">
    <source>
        <dbReference type="PROSITE-ProRule" id="PRU00498"/>
    </source>
</evidence>
<evidence type="ECO:0000305" key="7"/>
<feature type="chain" id="PRO_0000405184" description="Genome polyprotein">
    <location>
        <begin position="1" status="less than"/>
        <end position="496" status="greater than"/>
    </location>
</feature>
<feature type="chain" id="PRO_0000037832" description="Envelope protein E" evidence="2">
    <location>
        <begin position="1"/>
        <end position="496"/>
    </location>
</feature>
<feature type="topological domain" description="Extracellular" evidence="5">
    <location>
        <begin position="1" status="less than"/>
        <end position="447"/>
    </location>
</feature>
<feature type="transmembrane region" description="Helical" evidence="5">
    <location>
        <begin position="448"/>
        <end position="468"/>
    </location>
</feature>
<feature type="topological domain" description="Cytoplasmic" evidence="5">
    <location>
        <begin position="469"/>
        <end position="479"/>
    </location>
</feature>
<feature type="transmembrane region" description="Helical" evidence="5">
    <location>
        <begin position="480"/>
        <end position="496" status="greater than"/>
    </location>
</feature>
<feature type="region of interest" description="Fusion peptide" evidence="3">
    <location>
        <begin position="98"/>
        <end position="111"/>
    </location>
</feature>
<feature type="glycosylation site" description="N-linked (GlcNAc...) asparagine; by host" evidence="6">
    <location>
        <position position="154"/>
    </location>
</feature>
<feature type="disulfide bond" evidence="3">
    <location>
        <begin position="3"/>
        <end position="30"/>
    </location>
</feature>
<feature type="disulfide bond" evidence="4">
    <location>
        <begin position="60"/>
        <end position="121"/>
    </location>
</feature>
<feature type="disulfide bond" evidence="3">
    <location>
        <begin position="60"/>
        <end position="116"/>
    </location>
</feature>
<feature type="disulfide bond" evidence="3">
    <location>
        <begin position="74"/>
        <end position="105"/>
    </location>
</feature>
<feature type="disulfide bond" evidence="3">
    <location>
        <begin position="92"/>
        <end position="121"/>
    </location>
</feature>
<feature type="disulfide bond" evidence="4">
    <location>
        <begin position="92"/>
        <end position="116"/>
    </location>
</feature>
<feature type="disulfide bond" evidence="3">
    <location>
        <begin position="186"/>
        <end position="290"/>
    </location>
</feature>
<feature type="disulfide bond" evidence="3">
    <location>
        <begin position="307"/>
        <end position="338"/>
    </location>
</feature>
<feature type="non-terminal residue">
    <location>
        <position position="1"/>
    </location>
</feature>
<feature type="non-terminal residue">
    <location>
        <position position="496"/>
    </location>
</feature>
<keyword id="KW-1165">Clathrin-mediated endocytosis of virus by host</keyword>
<keyword id="KW-0165">Cleavage on pair of basic residues</keyword>
<keyword id="KW-1015">Disulfide bond</keyword>
<keyword id="KW-1170">Fusion of virus membrane with host endosomal membrane</keyword>
<keyword id="KW-1168">Fusion of virus membrane with host membrane</keyword>
<keyword id="KW-0325">Glycoprotein</keyword>
<keyword id="KW-1038">Host endoplasmic reticulum</keyword>
<keyword id="KW-1043">Host membrane</keyword>
<keyword id="KW-0945">Host-virus interaction</keyword>
<keyword id="KW-1090">Inhibition of host innate immune response by virus</keyword>
<keyword id="KW-0472">Membrane</keyword>
<keyword id="KW-0941">Suppressor of RNA silencing</keyword>
<keyword id="KW-0812">Transmembrane</keyword>
<keyword id="KW-1133">Transmembrane helix</keyword>
<keyword id="KW-1161">Viral attachment to host cell</keyword>
<keyword id="KW-0261">Viral envelope protein</keyword>
<keyword id="KW-0899">Viral immunoevasion</keyword>
<keyword id="KW-1162">Viral penetration into host cytoplasm</keyword>
<keyword id="KW-0946">Virion</keyword>
<keyword id="KW-1164">Virus endocytosis by host</keyword>
<keyword id="KW-1160">Virus entry into host cell</keyword>
<keyword id="KW-0862">Zinc</keyword>
<organism>
    <name type="scientific">Louping ill virus (strain K)</name>
    <name type="common">Li</name>
    <dbReference type="NCBI Taxonomy" id="36387"/>
    <lineage>
        <taxon>Viruses</taxon>
        <taxon>Riboviria</taxon>
        <taxon>Orthornavirae</taxon>
        <taxon>Kitrinoviricota</taxon>
        <taxon>Flasuviricetes</taxon>
        <taxon>Amarillovirales</taxon>
        <taxon>Flaviviridae</taxon>
        <taxon>Orthoflavivirus</taxon>
        <taxon>Orthoflavivirus loupingi</taxon>
    </lineage>
</organism>
<protein>
    <recommendedName>
        <fullName>Genome polyprotein</fullName>
    </recommendedName>
    <component>
        <recommendedName>
            <fullName>Envelope protein E</fullName>
        </recommendedName>
    </component>
</protein>
<proteinExistence type="inferred from homology"/>
<comment type="function">
    <molecule>Envelope protein E</molecule>
    <text evidence="4">Binds to host cell surface receptor and mediates fusion between viral and cellular membranes. Envelope protein is synthesized in the endoplasmic reticulum in the form of heterodimer with protein prM. They play a role in virion budding in the ER, and the newly formed immature particle is covered with 60 spikes composed of heterodimer between precursor prM and envelope protein E. The virion is transported to the Golgi apparatus where the low pH causes dissociation of PrM-E heterodimers and formation of E homodimers. prM-E cleavage is ineficient, and many virions are only partially matured. These uncleaved prM would play a role in immune evasion.</text>
</comment>
<comment type="subunit">
    <molecule>Envelope protein E</molecule>
    <text evidence="4">Homodimer; in the endoplasmic reticulum and Golgi.</text>
</comment>
<comment type="subcellular location">
    <molecule>Envelope protein E</molecule>
    <subcellularLocation>
        <location evidence="7">Virion membrane</location>
        <topology evidence="1">Multi-pass membrane protein</topology>
    </subcellularLocation>
    <subcellularLocation>
        <location evidence="1">Host endoplasmic reticulum membrane</location>
        <topology evidence="5">Multi-pass membrane protein</topology>
    </subcellularLocation>
    <text evidence="1">ER membrane retention is mediated by the transmembrane domains.</text>
</comment>
<comment type="PTM">
    <molecule>Envelope protein E</molecule>
    <text evidence="4">N-glycosylated.</text>
</comment>
<name>POLG_LIVK</name>
<sequence length="496" mass="53632">SRCTHLENRDFVTGTQGTTRVTLVLELGGCVTITAEGKPSMDVWLDAIYQESPAKTREYCLHAKLSETKVAARCPTMGPAVLTEERQIGTVCKRDQSDRGWGNHCGLFGKGSIVACVKAACEAKKKATGYVYDANKIVYTVKVEPHTGDYVAANETHKGRKTATFTVSSEKTILTLGEYGDVSLLCRVASGVDLAQTIILELDKTAEHLPTAWQVHRDWFNDLALPWKHDGNPHWNNAERLVEFGAPHAVKMDVYNLGDQTGVLLKALAGVPVAHIEGNKYHLKSGHVTCEVGLEKLKMKGLTYTMCDKSKFAWKRTPTDSGHDTVVMEVTFSGSKPCRIPVRAVAHGSPDVNVAMLITPNPTIENDGGGFIEMQLPPGDNIIYVGELSHQWFQTGSSIGRVFQTTRKGIERLTVIGEHAWDFGSAGGFFSSIGKAVHTVLGGAFNSIFGGVGFLPKLLMGVALAWLGLNTRNPTMSMSFLLAGGLVLAMTLGVGA</sequence>